<reference key="1">
    <citation type="journal article" date="2007" name="PLoS ONE">
        <title>A glimpse of streptococcal toxic shock syndrome from comparative genomics of S. suis 2 Chinese isolates.</title>
        <authorList>
            <person name="Chen C."/>
            <person name="Tang J."/>
            <person name="Dong W."/>
            <person name="Wang C."/>
            <person name="Feng Y."/>
            <person name="Wang J."/>
            <person name="Zheng F."/>
            <person name="Pan X."/>
            <person name="Liu D."/>
            <person name="Li M."/>
            <person name="Song Y."/>
            <person name="Zhu X."/>
            <person name="Sun H."/>
            <person name="Feng T."/>
            <person name="Guo Z."/>
            <person name="Ju A."/>
            <person name="Ge J."/>
            <person name="Dong Y."/>
            <person name="Sun W."/>
            <person name="Jiang Y."/>
            <person name="Wang J."/>
            <person name="Yan J."/>
            <person name="Yang H."/>
            <person name="Wang X."/>
            <person name="Gao G.F."/>
            <person name="Yang R."/>
            <person name="Wang J."/>
            <person name="Yu J."/>
        </authorList>
    </citation>
    <scope>NUCLEOTIDE SEQUENCE [LARGE SCALE GENOMIC DNA]</scope>
    <source>
        <strain>98HAH33</strain>
    </source>
</reference>
<accession>A4W1H6</accession>
<sequence>MKIAIGCDHIVTYEKIAVVDYLKNQGYEVLDFGTYDNVRTHYPIFGKKVGEAVVSGQADLGICICGTGVGINNAVNKVPGVRSALVRDMTSALYAKEELNANVIGFGGKITGELLMCDIIEAFIKAEYKPTEENKRLIEKIAAVETLNQEQANPEFFTEFLEKWDRGEYHD</sequence>
<comment type="catalytic activity">
    <reaction evidence="1">
        <text>aldehydo-D-galactose 6-phosphate = keto-D-tagatose 6-phosphate</text>
        <dbReference type="Rhea" id="RHEA:13033"/>
        <dbReference type="ChEBI" id="CHEBI:58255"/>
        <dbReference type="ChEBI" id="CHEBI:134283"/>
        <dbReference type="EC" id="5.3.1.26"/>
    </reaction>
</comment>
<comment type="pathway">
    <text evidence="1">Carbohydrate metabolism; D-galactose 6-phosphate degradation; D-tagatose 6-phosphate from D-galactose 6-phosphate: step 1/1.</text>
</comment>
<comment type="subunit">
    <text evidence="1">Heteromultimeric protein consisting of LacA and LacB.</text>
</comment>
<comment type="similarity">
    <text evidence="1">Belongs to the LacAB/RpiB family.</text>
</comment>
<gene>
    <name evidence="1" type="primary">lacB</name>
    <name type="ordered locus">SSU98_1057</name>
</gene>
<name>LACB_STRS2</name>
<feature type="chain" id="PRO_1000068932" description="Galactose-6-phosphate isomerase subunit LacB">
    <location>
        <begin position="1"/>
        <end position="171"/>
    </location>
</feature>
<organism>
    <name type="scientific">Streptococcus suis (strain 98HAH33)</name>
    <dbReference type="NCBI Taxonomy" id="391296"/>
    <lineage>
        <taxon>Bacteria</taxon>
        <taxon>Bacillati</taxon>
        <taxon>Bacillota</taxon>
        <taxon>Bacilli</taxon>
        <taxon>Lactobacillales</taxon>
        <taxon>Streptococcaceae</taxon>
        <taxon>Streptococcus</taxon>
    </lineage>
</organism>
<protein>
    <recommendedName>
        <fullName evidence="1">Galactose-6-phosphate isomerase subunit LacB</fullName>
        <ecNumber evidence="1">5.3.1.26</ecNumber>
    </recommendedName>
</protein>
<keyword id="KW-0413">Isomerase</keyword>
<keyword id="KW-0423">Lactose metabolism</keyword>
<evidence type="ECO:0000255" key="1">
    <source>
        <dbReference type="HAMAP-Rule" id="MF_01556"/>
    </source>
</evidence>
<dbReference type="EC" id="5.3.1.26" evidence="1"/>
<dbReference type="EMBL" id="CP000408">
    <property type="protein sequence ID" value="ABP92215.1"/>
    <property type="molecule type" value="Genomic_DNA"/>
</dbReference>
<dbReference type="SMR" id="A4W1H6"/>
<dbReference type="KEGG" id="ssv:SSU98_1057"/>
<dbReference type="HOGENOM" id="CLU_091396_2_0_9"/>
<dbReference type="UniPathway" id="UPA00702">
    <property type="reaction ID" value="UER00714"/>
</dbReference>
<dbReference type="GO" id="GO:0050044">
    <property type="term" value="F:galactose-6-phosphate isomerase activity"/>
    <property type="evidence" value="ECO:0007669"/>
    <property type="project" value="UniProtKB-UniRule"/>
</dbReference>
<dbReference type="GO" id="GO:0004751">
    <property type="term" value="F:ribose-5-phosphate isomerase activity"/>
    <property type="evidence" value="ECO:0007669"/>
    <property type="project" value="TreeGrafter"/>
</dbReference>
<dbReference type="GO" id="GO:0019316">
    <property type="term" value="P:D-allose catabolic process"/>
    <property type="evidence" value="ECO:0007669"/>
    <property type="project" value="TreeGrafter"/>
</dbReference>
<dbReference type="GO" id="GO:0019388">
    <property type="term" value="P:galactose catabolic process"/>
    <property type="evidence" value="ECO:0007669"/>
    <property type="project" value="UniProtKB-UniPathway"/>
</dbReference>
<dbReference type="GO" id="GO:0019512">
    <property type="term" value="P:lactose catabolic process via tagatose-6-phosphate"/>
    <property type="evidence" value="ECO:0007669"/>
    <property type="project" value="UniProtKB-UniRule"/>
</dbReference>
<dbReference type="GO" id="GO:0009052">
    <property type="term" value="P:pentose-phosphate shunt, non-oxidative branch"/>
    <property type="evidence" value="ECO:0007669"/>
    <property type="project" value="TreeGrafter"/>
</dbReference>
<dbReference type="Gene3D" id="3.40.1400.10">
    <property type="entry name" value="Sugar-phosphate isomerase, RpiB/LacA/LacB"/>
    <property type="match status" value="1"/>
</dbReference>
<dbReference type="HAMAP" id="MF_01556">
    <property type="entry name" value="LacB"/>
    <property type="match status" value="1"/>
</dbReference>
<dbReference type="InterPro" id="IPR004784">
    <property type="entry name" value="LacB"/>
</dbReference>
<dbReference type="InterPro" id="IPR003500">
    <property type="entry name" value="RpiB_LacA_LacB"/>
</dbReference>
<dbReference type="InterPro" id="IPR036569">
    <property type="entry name" value="RpiB_LacA_LacB_sf"/>
</dbReference>
<dbReference type="NCBIfam" id="TIGR01119">
    <property type="entry name" value="lacB"/>
    <property type="match status" value="1"/>
</dbReference>
<dbReference type="NCBIfam" id="NF004051">
    <property type="entry name" value="PRK05571.1"/>
    <property type="match status" value="1"/>
</dbReference>
<dbReference type="NCBIfam" id="NF006381">
    <property type="entry name" value="PRK08622.1"/>
    <property type="match status" value="1"/>
</dbReference>
<dbReference type="NCBIfam" id="NF009258">
    <property type="entry name" value="PRK12615.1"/>
    <property type="match status" value="1"/>
</dbReference>
<dbReference type="NCBIfam" id="TIGR00689">
    <property type="entry name" value="rpiB_lacA_lacB"/>
    <property type="match status" value="1"/>
</dbReference>
<dbReference type="PANTHER" id="PTHR30345:SF0">
    <property type="entry name" value="DNA DAMAGE-REPAIR_TOLERATION PROTEIN DRT102"/>
    <property type="match status" value="1"/>
</dbReference>
<dbReference type="PANTHER" id="PTHR30345">
    <property type="entry name" value="RIBOSE-5-PHOSPHATE ISOMERASE B"/>
    <property type="match status" value="1"/>
</dbReference>
<dbReference type="Pfam" id="PF02502">
    <property type="entry name" value="LacAB_rpiB"/>
    <property type="match status" value="1"/>
</dbReference>
<dbReference type="PIRSF" id="PIRSF005384">
    <property type="entry name" value="RpiB_LacA_B"/>
    <property type="match status" value="1"/>
</dbReference>
<dbReference type="SUPFAM" id="SSF89623">
    <property type="entry name" value="Ribose/Galactose isomerase RpiB/AlsB"/>
    <property type="match status" value="1"/>
</dbReference>
<proteinExistence type="inferred from homology"/>